<feature type="chain" id="PRO_0000153443" description="Histidinol-phosphate aminotransferase">
    <location>
        <begin position="1"/>
        <end position="359"/>
    </location>
</feature>
<feature type="modified residue" description="N6-(pyridoxal phosphate)lysine" evidence="1">
    <location>
        <position position="217"/>
    </location>
</feature>
<organism>
    <name type="scientific">Salmonella typhi</name>
    <dbReference type="NCBI Taxonomy" id="90370"/>
    <lineage>
        <taxon>Bacteria</taxon>
        <taxon>Pseudomonadati</taxon>
        <taxon>Pseudomonadota</taxon>
        <taxon>Gammaproteobacteria</taxon>
        <taxon>Enterobacterales</taxon>
        <taxon>Enterobacteriaceae</taxon>
        <taxon>Salmonella</taxon>
    </lineage>
</organism>
<comment type="catalytic activity">
    <reaction evidence="1">
        <text>L-histidinol phosphate + 2-oxoglutarate = 3-(imidazol-4-yl)-2-oxopropyl phosphate + L-glutamate</text>
        <dbReference type="Rhea" id="RHEA:23744"/>
        <dbReference type="ChEBI" id="CHEBI:16810"/>
        <dbReference type="ChEBI" id="CHEBI:29985"/>
        <dbReference type="ChEBI" id="CHEBI:57766"/>
        <dbReference type="ChEBI" id="CHEBI:57980"/>
        <dbReference type="EC" id="2.6.1.9"/>
    </reaction>
</comment>
<comment type="cofactor">
    <cofactor evidence="1">
        <name>pyridoxal 5'-phosphate</name>
        <dbReference type="ChEBI" id="CHEBI:597326"/>
    </cofactor>
</comment>
<comment type="pathway">
    <text evidence="1">Amino-acid biosynthesis; L-histidine biosynthesis; L-histidine from 5-phospho-alpha-D-ribose 1-diphosphate: step 7/9.</text>
</comment>
<comment type="subunit">
    <text evidence="1">Homodimer.</text>
</comment>
<comment type="similarity">
    <text evidence="1">Belongs to the class-II pyridoxal-phosphate-dependent aminotransferase family. Histidinol-phosphate aminotransferase subfamily.</text>
</comment>
<sequence>MSTENTLSVADLARENVRNLVPYQSARRLGGNGDVWLNANEFPTAVEFQLTQQTLNRYPECQPKAVIENYAQYAGVKPEQVLVSRGADEGIELVIRAFCEPGKDAILYCPPTYGMYSVSAETIGVERRTVPALENWQLDLQGISDNLDGAKVVFVCSPNNPTGQLINPQDLRTLLELTRGKAIVVADEAYIEFCPQATLAGWLVKYPHLVILRTLSKAFALAGLRCGFTLANEEVINLLLKVIAPYPLSTPVADIAAQALSPQGINVMRDRVAQTVQERQYLVNALQQTACVEHVFDSETNYILARFTASSSVFKSLWDQGIILRDQNKQPSLSGCLRITVGTRQENQRVIDALRAEPV</sequence>
<name>HIS8_SALTI</name>
<protein>
    <recommendedName>
        <fullName evidence="1">Histidinol-phosphate aminotransferase</fullName>
        <ecNumber evidence="1">2.6.1.9</ecNumber>
    </recommendedName>
    <alternativeName>
        <fullName evidence="1">Imidazole acetol-phosphate transaminase</fullName>
    </alternativeName>
</protein>
<accession>Q8Z5J9</accession>
<gene>
    <name evidence="1" type="primary">hisC</name>
    <name type="ordered locus">STY2282</name>
    <name type="ordered locus">t0800</name>
</gene>
<reference key="1">
    <citation type="journal article" date="2001" name="Nature">
        <title>Complete genome sequence of a multiple drug resistant Salmonella enterica serovar Typhi CT18.</title>
        <authorList>
            <person name="Parkhill J."/>
            <person name="Dougan G."/>
            <person name="James K.D."/>
            <person name="Thomson N.R."/>
            <person name="Pickard D."/>
            <person name="Wain J."/>
            <person name="Churcher C.M."/>
            <person name="Mungall K.L."/>
            <person name="Bentley S.D."/>
            <person name="Holden M.T.G."/>
            <person name="Sebaihia M."/>
            <person name="Baker S."/>
            <person name="Basham D."/>
            <person name="Brooks K."/>
            <person name="Chillingworth T."/>
            <person name="Connerton P."/>
            <person name="Cronin A."/>
            <person name="Davis P."/>
            <person name="Davies R.M."/>
            <person name="Dowd L."/>
            <person name="White N."/>
            <person name="Farrar J."/>
            <person name="Feltwell T."/>
            <person name="Hamlin N."/>
            <person name="Haque A."/>
            <person name="Hien T.T."/>
            <person name="Holroyd S."/>
            <person name="Jagels K."/>
            <person name="Krogh A."/>
            <person name="Larsen T.S."/>
            <person name="Leather S."/>
            <person name="Moule S."/>
            <person name="O'Gaora P."/>
            <person name="Parry C."/>
            <person name="Quail M.A."/>
            <person name="Rutherford K.M."/>
            <person name="Simmonds M."/>
            <person name="Skelton J."/>
            <person name="Stevens K."/>
            <person name="Whitehead S."/>
            <person name="Barrell B.G."/>
        </authorList>
    </citation>
    <scope>NUCLEOTIDE SEQUENCE [LARGE SCALE GENOMIC DNA]</scope>
    <source>
        <strain>CT18</strain>
    </source>
</reference>
<reference key="2">
    <citation type="journal article" date="2003" name="J. Bacteriol.">
        <title>Comparative genomics of Salmonella enterica serovar Typhi strains Ty2 and CT18.</title>
        <authorList>
            <person name="Deng W."/>
            <person name="Liou S.-R."/>
            <person name="Plunkett G. III"/>
            <person name="Mayhew G.F."/>
            <person name="Rose D.J."/>
            <person name="Burland V."/>
            <person name="Kodoyianni V."/>
            <person name="Schwartz D.C."/>
            <person name="Blattner F.R."/>
        </authorList>
    </citation>
    <scope>NUCLEOTIDE SEQUENCE [LARGE SCALE GENOMIC DNA]</scope>
    <source>
        <strain>ATCC 700931 / Ty2</strain>
    </source>
</reference>
<keyword id="KW-0028">Amino-acid biosynthesis</keyword>
<keyword id="KW-0032">Aminotransferase</keyword>
<keyword id="KW-0368">Histidine biosynthesis</keyword>
<keyword id="KW-0663">Pyridoxal phosphate</keyword>
<keyword id="KW-0808">Transferase</keyword>
<proteinExistence type="inferred from homology"/>
<evidence type="ECO:0000255" key="1">
    <source>
        <dbReference type="HAMAP-Rule" id="MF_01023"/>
    </source>
</evidence>
<dbReference type="EC" id="2.6.1.9" evidence="1"/>
<dbReference type="EMBL" id="AL513382">
    <property type="protein sequence ID" value="CAD02435.1"/>
    <property type="molecule type" value="Genomic_DNA"/>
</dbReference>
<dbReference type="EMBL" id="AE014613">
    <property type="protein sequence ID" value="AAO68491.1"/>
    <property type="molecule type" value="Genomic_DNA"/>
</dbReference>
<dbReference type="RefSeq" id="NP_456621.1">
    <property type="nucleotide sequence ID" value="NC_003198.1"/>
</dbReference>
<dbReference type="RefSeq" id="WP_000102709.1">
    <property type="nucleotide sequence ID" value="NZ_WSUR01000002.1"/>
</dbReference>
<dbReference type="SMR" id="Q8Z5J9"/>
<dbReference type="STRING" id="220341.gene:17586190"/>
<dbReference type="KEGG" id="stt:t0800"/>
<dbReference type="KEGG" id="sty:STY2282"/>
<dbReference type="PATRIC" id="fig|220341.7.peg.2302"/>
<dbReference type="eggNOG" id="COG0079">
    <property type="taxonomic scope" value="Bacteria"/>
</dbReference>
<dbReference type="HOGENOM" id="CLU_017584_3_1_6"/>
<dbReference type="OMA" id="NFVQFGR"/>
<dbReference type="OrthoDB" id="9813612at2"/>
<dbReference type="UniPathway" id="UPA00031">
    <property type="reaction ID" value="UER00012"/>
</dbReference>
<dbReference type="Proteomes" id="UP000000541">
    <property type="component" value="Chromosome"/>
</dbReference>
<dbReference type="Proteomes" id="UP000002670">
    <property type="component" value="Chromosome"/>
</dbReference>
<dbReference type="GO" id="GO:0004400">
    <property type="term" value="F:histidinol-phosphate transaminase activity"/>
    <property type="evidence" value="ECO:0007669"/>
    <property type="project" value="UniProtKB-UniRule"/>
</dbReference>
<dbReference type="GO" id="GO:0030170">
    <property type="term" value="F:pyridoxal phosphate binding"/>
    <property type="evidence" value="ECO:0007669"/>
    <property type="project" value="InterPro"/>
</dbReference>
<dbReference type="GO" id="GO:0000105">
    <property type="term" value="P:L-histidine biosynthetic process"/>
    <property type="evidence" value="ECO:0007669"/>
    <property type="project" value="UniProtKB-UniRule"/>
</dbReference>
<dbReference type="CDD" id="cd00609">
    <property type="entry name" value="AAT_like"/>
    <property type="match status" value="1"/>
</dbReference>
<dbReference type="FunFam" id="3.40.640.10:FF:000032">
    <property type="entry name" value="Histidinol-phosphate aminotransferase"/>
    <property type="match status" value="1"/>
</dbReference>
<dbReference type="Gene3D" id="3.90.1150.10">
    <property type="entry name" value="Aspartate Aminotransferase, domain 1"/>
    <property type="match status" value="1"/>
</dbReference>
<dbReference type="Gene3D" id="3.40.640.10">
    <property type="entry name" value="Type I PLP-dependent aspartate aminotransferase-like (Major domain)"/>
    <property type="match status" value="1"/>
</dbReference>
<dbReference type="HAMAP" id="MF_01023">
    <property type="entry name" value="HisC_aminotrans_2"/>
    <property type="match status" value="1"/>
</dbReference>
<dbReference type="InterPro" id="IPR001917">
    <property type="entry name" value="Aminotrans_II_pyridoxalP_BS"/>
</dbReference>
<dbReference type="InterPro" id="IPR004839">
    <property type="entry name" value="Aminotransferase_I/II_large"/>
</dbReference>
<dbReference type="InterPro" id="IPR005861">
    <property type="entry name" value="HisP_aminotrans"/>
</dbReference>
<dbReference type="InterPro" id="IPR015424">
    <property type="entry name" value="PyrdxlP-dep_Trfase"/>
</dbReference>
<dbReference type="InterPro" id="IPR015421">
    <property type="entry name" value="PyrdxlP-dep_Trfase_major"/>
</dbReference>
<dbReference type="InterPro" id="IPR015422">
    <property type="entry name" value="PyrdxlP-dep_Trfase_small"/>
</dbReference>
<dbReference type="NCBIfam" id="TIGR01141">
    <property type="entry name" value="hisC"/>
    <property type="match status" value="1"/>
</dbReference>
<dbReference type="PANTHER" id="PTHR42885:SF2">
    <property type="entry name" value="HISTIDINOL-PHOSPHATE AMINOTRANSFERASE"/>
    <property type="match status" value="1"/>
</dbReference>
<dbReference type="PANTHER" id="PTHR42885">
    <property type="entry name" value="HISTIDINOL-PHOSPHATE AMINOTRANSFERASE-RELATED"/>
    <property type="match status" value="1"/>
</dbReference>
<dbReference type="Pfam" id="PF00155">
    <property type="entry name" value="Aminotran_1_2"/>
    <property type="match status" value="1"/>
</dbReference>
<dbReference type="SUPFAM" id="SSF53383">
    <property type="entry name" value="PLP-dependent transferases"/>
    <property type="match status" value="1"/>
</dbReference>
<dbReference type="PROSITE" id="PS00599">
    <property type="entry name" value="AA_TRANSFER_CLASS_2"/>
    <property type="match status" value="1"/>
</dbReference>